<protein>
    <recommendedName>
        <fullName evidence="1">Large ribosomal subunit protein uL14</fullName>
    </recommendedName>
    <alternativeName>
        <fullName evidence="2">50S ribosomal protein L14</fullName>
    </alternativeName>
</protein>
<evidence type="ECO:0000255" key="1">
    <source>
        <dbReference type="HAMAP-Rule" id="MF_01367"/>
    </source>
</evidence>
<evidence type="ECO:0000305" key="2"/>
<reference key="1">
    <citation type="submission" date="2007-03" db="EMBL/GenBank/DDBJ databases">
        <authorList>
            <person name="Heidelberg J."/>
        </authorList>
    </citation>
    <scope>NUCLEOTIDE SEQUENCE [LARGE SCALE GENOMIC DNA]</scope>
    <source>
        <strain>ATCC 39541 / Classical Ogawa 395 / O395</strain>
    </source>
</reference>
<reference key="2">
    <citation type="journal article" date="2008" name="PLoS ONE">
        <title>A recalibrated molecular clock and independent origins for the cholera pandemic clones.</title>
        <authorList>
            <person name="Feng L."/>
            <person name="Reeves P.R."/>
            <person name="Lan R."/>
            <person name="Ren Y."/>
            <person name="Gao C."/>
            <person name="Zhou Z."/>
            <person name="Ren Y."/>
            <person name="Cheng J."/>
            <person name="Wang W."/>
            <person name="Wang J."/>
            <person name="Qian W."/>
            <person name="Li D."/>
            <person name="Wang L."/>
        </authorList>
    </citation>
    <scope>NUCLEOTIDE SEQUENCE [LARGE SCALE GENOMIC DNA]</scope>
    <source>
        <strain>ATCC 39541 / Classical Ogawa 395 / O395</strain>
    </source>
</reference>
<keyword id="KW-0687">Ribonucleoprotein</keyword>
<keyword id="KW-0689">Ribosomal protein</keyword>
<keyword id="KW-0694">RNA-binding</keyword>
<keyword id="KW-0699">rRNA-binding</keyword>
<organism>
    <name type="scientific">Vibrio cholerae serotype O1 (strain ATCC 39541 / Classical Ogawa 395 / O395)</name>
    <dbReference type="NCBI Taxonomy" id="345073"/>
    <lineage>
        <taxon>Bacteria</taxon>
        <taxon>Pseudomonadati</taxon>
        <taxon>Pseudomonadota</taxon>
        <taxon>Gammaproteobacteria</taxon>
        <taxon>Vibrionales</taxon>
        <taxon>Vibrionaceae</taxon>
        <taxon>Vibrio</taxon>
    </lineage>
</organism>
<accession>A5F556</accession>
<accession>C3LXI5</accession>
<dbReference type="EMBL" id="CP000627">
    <property type="protein sequence ID" value="ABQ20783.1"/>
    <property type="molecule type" value="Genomic_DNA"/>
</dbReference>
<dbReference type="EMBL" id="CP001235">
    <property type="protein sequence ID" value="ACP10685.1"/>
    <property type="molecule type" value="Genomic_DNA"/>
</dbReference>
<dbReference type="RefSeq" id="WP_000615540.1">
    <property type="nucleotide sequence ID" value="NZ_JAACZH010000007.1"/>
</dbReference>
<dbReference type="SMR" id="A5F556"/>
<dbReference type="GeneID" id="94012762"/>
<dbReference type="KEGG" id="vco:VC0395_A2164"/>
<dbReference type="KEGG" id="vcr:VC395_2699"/>
<dbReference type="PATRIC" id="fig|345073.21.peg.2599"/>
<dbReference type="eggNOG" id="COG0093">
    <property type="taxonomic scope" value="Bacteria"/>
</dbReference>
<dbReference type="HOGENOM" id="CLU_095071_2_1_6"/>
<dbReference type="OrthoDB" id="9806379at2"/>
<dbReference type="Proteomes" id="UP000000249">
    <property type="component" value="Chromosome 2"/>
</dbReference>
<dbReference type="GO" id="GO:0022625">
    <property type="term" value="C:cytosolic large ribosomal subunit"/>
    <property type="evidence" value="ECO:0007669"/>
    <property type="project" value="TreeGrafter"/>
</dbReference>
<dbReference type="GO" id="GO:0070180">
    <property type="term" value="F:large ribosomal subunit rRNA binding"/>
    <property type="evidence" value="ECO:0007669"/>
    <property type="project" value="TreeGrafter"/>
</dbReference>
<dbReference type="GO" id="GO:0003735">
    <property type="term" value="F:structural constituent of ribosome"/>
    <property type="evidence" value="ECO:0007669"/>
    <property type="project" value="InterPro"/>
</dbReference>
<dbReference type="GO" id="GO:0006412">
    <property type="term" value="P:translation"/>
    <property type="evidence" value="ECO:0007669"/>
    <property type="project" value="UniProtKB-UniRule"/>
</dbReference>
<dbReference type="CDD" id="cd00337">
    <property type="entry name" value="Ribosomal_uL14"/>
    <property type="match status" value="1"/>
</dbReference>
<dbReference type="FunFam" id="2.40.150.20:FF:000001">
    <property type="entry name" value="50S ribosomal protein L14"/>
    <property type="match status" value="1"/>
</dbReference>
<dbReference type="Gene3D" id="2.40.150.20">
    <property type="entry name" value="Ribosomal protein L14"/>
    <property type="match status" value="1"/>
</dbReference>
<dbReference type="HAMAP" id="MF_01367">
    <property type="entry name" value="Ribosomal_uL14"/>
    <property type="match status" value="1"/>
</dbReference>
<dbReference type="InterPro" id="IPR000218">
    <property type="entry name" value="Ribosomal_uL14"/>
</dbReference>
<dbReference type="InterPro" id="IPR005745">
    <property type="entry name" value="Ribosomal_uL14_bac-type"/>
</dbReference>
<dbReference type="InterPro" id="IPR019972">
    <property type="entry name" value="Ribosomal_uL14_CS"/>
</dbReference>
<dbReference type="InterPro" id="IPR036853">
    <property type="entry name" value="Ribosomal_uL14_sf"/>
</dbReference>
<dbReference type="NCBIfam" id="TIGR01067">
    <property type="entry name" value="rplN_bact"/>
    <property type="match status" value="1"/>
</dbReference>
<dbReference type="PANTHER" id="PTHR11761">
    <property type="entry name" value="50S/60S RIBOSOMAL PROTEIN L14/L23"/>
    <property type="match status" value="1"/>
</dbReference>
<dbReference type="PANTHER" id="PTHR11761:SF3">
    <property type="entry name" value="LARGE RIBOSOMAL SUBUNIT PROTEIN UL14M"/>
    <property type="match status" value="1"/>
</dbReference>
<dbReference type="Pfam" id="PF00238">
    <property type="entry name" value="Ribosomal_L14"/>
    <property type="match status" value="1"/>
</dbReference>
<dbReference type="SMART" id="SM01374">
    <property type="entry name" value="Ribosomal_L14"/>
    <property type="match status" value="1"/>
</dbReference>
<dbReference type="SUPFAM" id="SSF50193">
    <property type="entry name" value="Ribosomal protein L14"/>
    <property type="match status" value="1"/>
</dbReference>
<dbReference type="PROSITE" id="PS00049">
    <property type="entry name" value="RIBOSOMAL_L14"/>
    <property type="match status" value="1"/>
</dbReference>
<name>RL14_VIBC3</name>
<comment type="function">
    <text evidence="1">Binds to 23S rRNA. Forms part of two intersubunit bridges in the 70S ribosome.</text>
</comment>
<comment type="subunit">
    <text evidence="1">Part of the 50S ribosomal subunit. Forms a cluster with proteins L3 and L19. In the 70S ribosome, L14 and L19 interact and together make contacts with the 16S rRNA in bridges B5 and B8.</text>
</comment>
<comment type="similarity">
    <text evidence="1">Belongs to the universal ribosomal protein uL14 family.</text>
</comment>
<sequence>MIQMQTMLDAADNSGARSVMCIKVLGGSHRRYAHVGDIIKVTVKEAIPRGKVKKGDVLKAVVVRTRKGVRRPDGSVIRFDRNACVLLNNNSEQPIGTRIFGPVTRELRNAKFMKIVSLAPEVL</sequence>
<proteinExistence type="inferred from homology"/>
<feature type="chain" id="PRO_1000073427" description="Large ribosomal subunit protein uL14">
    <location>
        <begin position="1"/>
        <end position="123"/>
    </location>
</feature>
<gene>
    <name evidence="1" type="primary">rplN</name>
    <name type="ordered locus">VC0395_A2164</name>
    <name type="ordered locus">VC395_2699</name>
</gene>